<feature type="chain" id="PRO_1000187315" description="Malonate-semialdehyde dehydrogenase">
    <location>
        <begin position="1"/>
        <end position="488"/>
    </location>
</feature>
<feature type="active site" description="Nucleophile" evidence="1">
    <location>
        <position position="284"/>
    </location>
</feature>
<feature type="binding site" evidence="1">
    <location>
        <position position="150"/>
    </location>
    <ligand>
        <name>NAD(+)</name>
        <dbReference type="ChEBI" id="CHEBI:57540"/>
    </ligand>
</feature>
<feature type="binding site" evidence="1">
    <location>
        <position position="152"/>
    </location>
    <ligand>
        <name>NAD(+)</name>
        <dbReference type="ChEBI" id="CHEBI:57540"/>
    </ligand>
</feature>
<feature type="binding site" evidence="1">
    <location>
        <position position="176"/>
    </location>
    <ligand>
        <name>NAD(+)</name>
        <dbReference type="ChEBI" id="CHEBI:57540"/>
    </ligand>
</feature>
<feature type="binding site" evidence="1">
    <location>
        <position position="179"/>
    </location>
    <ligand>
        <name>NAD(+)</name>
        <dbReference type="ChEBI" id="CHEBI:57540"/>
    </ligand>
</feature>
<feature type="binding site" evidence="1">
    <location>
        <position position="180"/>
    </location>
    <ligand>
        <name>NAD(+)</name>
        <dbReference type="ChEBI" id="CHEBI:57540"/>
    </ligand>
</feature>
<feature type="binding site" evidence="1">
    <location>
        <position position="229"/>
    </location>
    <ligand>
        <name>NAD(+)</name>
        <dbReference type="ChEBI" id="CHEBI:57540"/>
    </ligand>
</feature>
<feature type="binding site" evidence="1">
    <location>
        <position position="251"/>
    </location>
    <ligand>
        <name>NAD(+)</name>
        <dbReference type="ChEBI" id="CHEBI:57540"/>
    </ligand>
</feature>
<feature type="binding site" evidence="1">
    <location>
        <position position="382"/>
    </location>
    <ligand>
        <name>NAD(+)</name>
        <dbReference type="ChEBI" id="CHEBI:57540"/>
    </ligand>
</feature>
<sequence>MADVRKLKNYIDGEWVESKTDKYEDVINPATGEVLCQVPISTRAELDQAAVIAEQAFEKWSQVAVPRRARVLFSFQQLLIQHKEELARLITLENGKNLSEARGEVQRGIENVEFAAGAPTLMMGDSLASIATDVEAANYRYPVGVVGGIAPFNFPMMVPCWMFPMAIALGNSFILKPSERTPLLMEKLVELFSEAGLPKGVFNVVYGAHDVVNGILENEIIKAVSFVGSKPVGEYVYKTGSANLKRVQALTGAKNHTIVLNDADLEDTVTNVISAAFGSAGERCMACAVVTVEEDIADEFLEALRTAAKNVKIGNGLDDGVFLGPVIREENQKRTIAYIEKGVEEGAKLTVDGRETGLSEGHFVGPTILEDVTTDMTIWKDEIFAPVLSVIRVKNLQEAVRVANLSEFANGACIFTNNAKAIRYFREKIDAGMLGVNLGVPAPMAFFPFSGWKSSFYGTLHANGKDSVDFYTHKKVVTARYSLKGYEE</sequence>
<name>IOLA_LISMH</name>
<keyword id="KW-0520">NAD</keyword>
<keyword id="KW-0560">Oxidoreductase</keyword>
<proteinExistence type="inferred from homology"/>
<dbReference type="EC" id="1.2.1.27" evidence="1"/>
<dbReference type="EMBL" id="CP001175">
    <property type="protein sequence ID" value="ACK40591.1"/>
    <property type="molecule type" value="Genomic_DNA"/>
</dbReference>
<dbReference type="RefSeq" id="WP_012581982.1">
    <property type="nucleotide sequence ID" value="NC_011660.1"/>
</dbReference>
<dbReference type="SMR" id="B8DCT8"/>
<dbReference type="KEGG" id="lmh:LMHCC_2253"/>
<dbReference type="HOGENOM" id="CLU_005391_1_10_9"/>
<dbReference type="UniPathway" id="UPA00076">
    <property type="reaction ID" value="UER00148"/>
</dbReference>
<dbReference type="GO" id="GO:0018478">
    <property type="term" value="F:malonate-semialdehyde dehydrogenase (acetylating) activity"/>
    <property type="evidence" value="ECO:0007669"/>
    <property type="project" value="UniProtKB-UniRule"/>
</dbReference>
<dbReference type="GO" id="GO:0004491">
    <property type="term" value="F:methylmalonate-semialdehyde dehydrogenase (acylating, NAD) activity"/>
    <property type="evidence" value="ECO:0007669"/>
    <property type="project" value="UniProtKB-UniRule"/>
</dbReference>
<dbReference type="GO" id="GO:0019310">
    <property type="term" value="P:inositol catabolic process"/>
    <property type="evidence" value="ECO:0007669"/>
    <property type="project" value="UniProtKB-UniRule"/>
</dbReference>
<dbReference type="GO" id="GO:0006210">
    <property type="term" value="P:thymine catabolic process"/>
    <property type="evidence" value="ECO:0007669"/>
    <property type="project" value="TreeGrafter"/>
</dbReference>
<dbReference type="GO" id="GO:0006574">
    <property type="term" value="P:valine catabolic process"/>
    <property type="evidence" value="ECO:0007669"/>
    <property type="project" value="TreeGrafter"/>
</dbReference>
<dbReference type="CDD" id="cd07085">
    <property type="entry name" value="ALDH_F6_MMSDH"/>
    <property type="match status" value="1"/>
</dbReference>
<dbReference type="FunFam" id="3.40.309.10:FF:000002">
    <property type="entry name" value="Methylmalonate-semialdehyde dehydrogenase (Acylating)"/>
    <property type="match status" value="1"/>
</dbReference>
<dbReference type="FunFam" id="3.40.605.10:FF:000003">
    <property type="entry name" value="Methylmalonate-semialdehyde dehydrogenase [acylating]"/>
    <property type="match status" value="1"/>
</dbReference>
<dbReference type="Gene3D" id="3.40.605.10">
    <property type="entry name" value="Aldehyde Dehydrogenase, Chain A, domain 1"/>
    <property type="match status" value="1"/>
</dbReference>
<dbReference type="Gene3D" id="3.40.309.10">
    <property type="entry name" value="Aldehyde Dehydrogenase, Chain A, domain 2"/>
    <property type="match status" value="1"/>
</dbReference>
<dbReference type="HAMAP" id="MF_01670">
    <property type="entry name" value="IolA"/>
    <property type="match status" value="1"/>
</dbReference>
<dbReference type="InterPro" id="IPR016161">
    <property type="entry name" value="Ald_DH/histidinol_DH"/>
</dbReference>
<dbReference type="InterPro" id="IPR016163">
    <property type="entry name" value="Ald_DH_C"/>
</dbReference>
<dbReference type="InterPro" id="IPR016160">
    <property type="entry name" value="Ald_DH_CS_CYS"/>
</dbReference>
<dbReference type="InterPro" id="IPR016162">
    <property type="entry name" value="Ald_DH_N"/>
</dbReference>
<dbReference type="InterPro" id="IPR015590">
    <property type="entry name" value="Aldehyde_DH_dom"/>
</dbReference>
<dbReference type="InterPro" id="IPR010061">
    <property type="entry name" value="MeMal-semiAld_DH"/>
</dbReference>
<dbReference type="InterPro" id="IPR023510">
    <property type="entry name" value="MSDH_GmP_bac"/>
</dbReference>
<dbReference type="NCBIfam" id="TIGR01722">
    <property type="entry name" value="MMSDH"/>
    <property type="match status" value="1"/>
</dbReference>
<dbReference type="PANTHER" id="PTHR43866">
    <property type="entry name" value="MALONATE-SEMIALDEHYDE DEHYDROGENASE"/>
    <property type="match status" value="1"/>
</dbReference>
<dbReference type="PANTHER" id="PTHR43866:SF4">
    <property type="entry name" value="MALONATE-SEMIALDEHYDE DEHYDROGENASE"/>
    <property type="match status" value="1"/>
</dbReference>
<dbReference type="Pfam" id="PF00171">
    <property type="entry name" value="Aldedh"/>
    <property type="match status" value="1"/>
</dbReference>
<dbReference type="SUPFAM" id="SSF53720">
    <property type="entry name" value="ALDH-like"/>
    <property type="match status" value="1"/>
</dbReference>
<dbReference type="PROSITE" id="PS00070">
    <property type="entry name" value="ALDEHYDE_DEHYDR_CYS"/>
    <property type="match status" value="1"/>
</dbReference>
<organism>
    <name type="scientific">Listeria monocytogenes serotype 4a (strain HCC23)</name>
    <dbReference type="NCBI Taxonomy" id="552536"/>
    <lineage>
        <taxon>Bacteria</taxon>
        <taxon>Bacillati</taxon>
        <taxon>Bacillota</taxon>
        <taxon>Bacilli</taxon>
        <taxon>Bacillales</taxon>
        <taxon>Listeriaceae</taxon>
        <taxon>Listeria</taxon>
    </lineage>
</organism>
<gene>
    <name evidence="1" type="primary">iolA</name>
    <name type="ordered locus">LMHCC_2253</name>
</gene>
<evidence type="ECO:0000255" key="1">
    <source>
        <dbReference type="HAMAP-Rule" id="MF_01670"/>
    </source>
</evidence>
<protein>
    <recommendedName>
        <fullName evidence="1">Malonate-semialdehyde dehydrogenase</fullName>
        <shortName evidence="1">MSA dehydrogenase</shortName>
        <ecNumber evidence="1">1.2.1.27</ecNumber>
    </recommendedName>
    <alternativeName>
        <fullName evidence="1">Methylmalonate-semialdehyde dehydrogenase</fullName>
        <shortName evidence="1">MMSA dehydrogenase</shortName>
        <shortName evidence="1">MSDH</shortName>
    </alternativeName>
</protein>
<reference key="1">
    <citation type="journal article" date="2011" name="J. Bacteriol.">
        <title>Genome sequence of lineage III Listeria monocytogenes strain HCC23.</title>
        <authorList>
            <person name="Steele C.L."/>
            <person name="Donaldson J.R."/>
            <person name="Paul D."/>
            <person name="Banes M.M."/>
            <person name="Arick T."/>
            <person name="Bridges S.M."/>
            <person name="Lawrence M.L."/>
        </authorList>
    </citation>
    <scope>NUCLEOTIDE SEQUENCE [LARGE SCALE GENOMIC DNA]</scope>
    <source>
        <strain>HCC23</strain>
    </source>
</reference>
<comment type="function">
    <text evidence="1">Catalyzes the oxidation of malonate semialdehyde (MSA) and methylmalonate semialdehyde (MMSA) into acetyl-CoA and propanoyl-CoA, respectively. Is involved in a myo-inositol catabolic pathway. Bicarbonate, and not CO2, is the end-product of the enzymatic reaction.</text>
</comment>
<comment type="catalytic activity">
    <reaction evidence="1">
        <text>3-oxopropanoate + NAD(+) + CoA + H2O = hydrogencarbonate + acetyl-CoA + NADH + H(+)</text>
        <dbReference type="Rhea" id="RHEA:76615"/>
        <dbReference type="ChEBI" id="CHEBI:15377"/>
        <dbReference type="ChEBI" id="CHEBI:15378"/>
        <dbReference type="ChEBI" id="CHEBI:17544"/>
        <dbReference type="ChEBI" id="CHEBI:33190"/>
        <dbReference type="ChEBI" id="CHEBI:57287"/>
        <dbReference type="ChEBI" id="CHEBI:57288"/>
        <dbReference type="ChEBI" id="CHEBI:57540"/>
        <dbReference type="ChEBI" id="CHEBI:57945"/>
        <dbReference type="EC" id="1.2.1.27"/>
    </reaction>
    <physiologicalReaction direction="left-to-right" evidence="1">
        <dbReference type="Rhea" id="RHEA:76616"/>
    </physiologicalReaction>
</comment>
<comment type="catalytic activity">
    <reaction evidence="1">
        <text>2-methyl-3-oxopropanoate + NAD(+) + CoA + H2O = propanoyl-CoA + hydrogencarbonate + NADH + H(+)</text>
        <dbReference type="Rhea" id="RHEA:20804"/>
        <dbReference type="ChEBI" id="CHEBI:15377"/>
        <dbReference type="ChEBI" id="CHEBI:15378"/>
        <dbReference type="ChEBI" id="CHEBI:17544"/>
        <dbReference type="ChEBI" id="CHEBI:57287"/>
        <dbReference type="ChEBI" id="CHEBI:57392"/>
        <dbReference type="ChEBI" id="CHEBI:57540"/>
        <dbReference type="ChEBI" id="CHEBI:57700"/>
        <dbReference type="ChEBI" id="CHEBI:57945"/>
        <dbReference type="EC" id="1.2.1.27"/>
    </reaction>
    <physiologicalReaction direction="left-to-right" evidence="1">
        <dbReference type="Rhea" id="RHEA:20805"/>
    </physiologicalReaction>
</comment>
<comment type="pathway">
    <text evidence="1">Polyol metabolism; myo-inositol degradation into acetyl-CoA; acetyl-CoA from myo-inositol: step 7/7.</text>
</comment>
<comment type="subunit">
    <text evidence="1">Homotetramer.</text>
</comment>
<comment type="similarity">
    <text evidence="1">Belongs to the aldehyde dehydrogenase family. IolA subfamily.</text>
</comment>
<accession>B8DCT8</accession>